<sequence>MARLTVEECMGRTNNKFKLVILASQRAHDLNSGACPVIKHKNGKNTVIALKEIAAKQLDVSSLFNLSVQRCRKYMEKFINSDEQCVTNKSKIDIFQQNAITSSFNELGNNSNNQGSNLLGRDNFFSTPENRNTSNTDS</sequence>
<proteinExistence type="inferred from homology"/>
<comment type="function">
    <text evidence="1">Promotes RNA polymerase assembly. Latches the N- and C-terminal regions of the beta' subunit thereby facilitating its interaction with the beta and alpha subunits.</text>
</comment>
<comment type="catalytic activity">
    <reaction evidence="1">
        <text>RNA(n) + a ribonucleoside 5'-triphosphate = RNA(n+1) + diphosphate</text>
        <dbReference type="Rhea" id="RHEA:21248"/>
        <dbReference type="Rhea" id="RHEA-COMP:14527"/>
        <dbReference type="Rhea" id="RHEA-COMP:17342"/>
        <dbReference type="ChEBI" id="CHEBI:33019"/>
        <dbReference type="ChEBI" id="CHEBI:61557"/>
        <dbReference type="ChEBI" id="CHEBI:140395"/>
        <dbReference type="EC" id="2.7.7.6"/>
    </reaction>
</comment>
<comment type="subunit">
    <text evidence="1">The RNAP catalytic core consists of 2 alpha, 1 beta, 1 beta' and 1 omega subunit. When a sigma factor is associated with the core the holoenzyme is formed, which can initiate transcription.</text>
</comment>
<comment type="similarity">
    <text evidence="1">Belongs to the RNA polymerase subunit omega family.</text>
</comment>
<protein>
    <recommendedName>
        <fullName evidence="1">DNA-directed RNA polymerase subunit omega</fullName>
        <shortName evidence="1">RNAP omega subunit</shortName>
        <ecNumber evidence="1">2.7.7.6</ecNumber>
    </recommendedName>
    <alternativeName>
        <fullName evidence="1">RNA polymerase omega subunit</fullName>
    </alternativeName>
    <alternativeName>
        <fullName evidence="1">Transcriptase subunit omega</fullName>
    </alternativeName>
</protein>
<feature type="chain" id="PRO_0000237454" description="DNA-directed RNA polymerase subunit omega">
    <location>
        <begin position="1"/>
        <end position="138"/>
    </location>
</feature>
<feature type="region of interest" description="Disordered" evidence="2">
    <location>
        <begin position="117"/>
        <end position="138"/>
    </location>
</feature>
<feature type="compositionally biased region" description="Polar residues" evidence="2">
    <location>
        <begin position="124"/>
        <end position="138"/>
    </location>
</feature>
<reference key="1">
    <citation type="journal article" date="2006" name="J. Bacteriol.">
        <title>The genome of the obligately intracellular bacterium Ehrlichia canis reveals themes of complex membrane structure and immune evasion strategies.</title>
        <authorList>
            <person name="Mavromatis K."/>
            <person name="Doyle C.K."/>
            <person name="Lykidis A."/>
            <person name="Ivanova N."/>
            <person name="Francino M.P."/>
            <person name="Chain P."/>
            <person name="Shin M."/>
            <person name="Malfatti S."/>
            <person name="Larimer F."/>
            <person name="Copeland A."/>
            <person name="Detter J.C."/>
            <person name="Land M."/>
            <person name="Richardson P.M."/>
            <person name="Yu X.J."/>
            <person name="Walker D.H."/>
            <person name="McBride J.W."/>
            <person name="Kyrpides N.C."/>
        </authorList>
    </citation>
    <scope>NUCLEOTIDE SEQUENCE [LARGE SCALE GENOMIC DNA]</scope>
    <source>
        <strain>Jake</strain>
    </source>
</reference>
<dbReference type="EC" id="2.7.7.6" evidence="1"/>
<dbReference type="EMBL" id="CP000107">
    <property type="protein sequence ID" value="AAZ68327.1"/>
    <property type="molecule type" value="Genomic_DNA"/>
</dbReference>
<dbReference type="RefSeq" id="WP_011304405.1">
    <property type="nucleotide sequence ID" value="NC_007354.1"/>
</dbReference>
<dbReference type="STRING" id="269484.Ecaj_0280"/>
<dbReference type="KEGG" id="ecn:Ecaj_0280"/>
<dbReference type="eggNOG" id="COG1758">
    <property type="taxonomic scope" value="Bacteria"/>
</dbReference>
<dbReference type="HOGENOM" id="CLU_125406_2_1_5"/>
<dbReference type="InParanoid" id="Q3YSH8"/>
<dbReference type="Proteomes" id="UP000000435">
    <property type="component" value="Chromosome"/>
</dbReference>
<dbReference type="GO" id="GO:0000428">
    <property type="term" value="C:DNA-directed RNA polymerase complex"/>
    <property type="evidence" value="ECO:0007669"/>
    <property type="project" value="UniProtKB-KW"/>
</dbReference>
<dbReference type="GO" id="GO:0003677">
    <property type="term" value="F:DNA binding"/>
    <property type="evidence" value="ECO:0007669"/>
    <property type="project" value="UniProtKB-UniRule"/>
</dbReference>
<dbReference type="GO" id="GO:0003899">
    <property type="term" value="F:DNA-directed RNA polymerase activity"/>
    <property type="evidence" value="ECO:0007669"/>
    <property type="project" value="UniProtKB-UniRule"/>
</dbReference>
<dbReference type="GO" id="GO:0006351">
    <property type="term" value="P:DNA-templated transcription"/>
    <property type="evidence" value="ECO:0007669"/>
    <property type="project" value="UniProtKB-UniRule"/>
</dbReference>
<dbReference type="Gene3D" id="3.90.940.10">
    <property type="match status" value="1"/>
</dbReference>
<dbReference type="HAMAP" id="MF_00366">
    <property type="entry name" value="RNApol_bact_RpoZ"/>
    <property type="match status" value="1"/>
</dbReference>
<dbReference type="InterPro" id="IPR003716">
    <property type="entry name" value="DNA-dir_RNA_pol_omega"/>
</dbReference>
<dbReference type="InterPro" id="IPR006110">
    <property type="entry name" value="Pol_omega/Rpo6/RPB6"/>
</dbReference>
<dbReference type="InterPro" id="IPR036161">
    <property type="entry name" value="RPB6/omega-like_sf"/>
</dbReference>
<dbReference type="NCBIfam" id="TIGR00690">
    <property type="entry name" value="rpoZ"/>
    <property type="match status" value="1"/>
</dbReference>
<dbReference type="PANTHER" id="PTHR34476">
    <property type="entry name" value="DNA-DIRECTED RNA POLYMERASE SUBUNIT OMEGA"/>
    <property type="match status" value="1"/>
</dbReference>
<dbReference type="PANTHER" id="PTHR34476:SF1">
    <property type="entry name" value="DNA-DIRECTED RNA POLYMERASE SUBUNIT OMEGA"/>
    <property type="match status" value="1"/>
</dbReference>
<dbReference type="Pfam" id="PF01192">
    <property type="entry name" value="RNA_pol_Rpb6"/>
    <property type="match status" value="1"/>
</dbReference>
<dbReference type="SMART" id="SM01409">
    <property type="entry name" value="RNA_pol_Rpb6"/>
    <property type="match status" value="1"/>
</dbReference>
<dbReference type="SUPFAM" id="SSF63562">
    <property type="entry name" value="RPB6/omega subunit-like"/>
    <property type="match status" value="1"/>
</dbReference>
<organism>
    <name type="scientific">Ehrlichia canis (strain Jake)</name>
    <dbReference type="NCBI Taxonomy" id="269484"/>
    <lineage>
        <taxon>Bacteria</taxon>
        <taxon>Pseudomonadati</taxon>
        <taxon>Pseudomonadota</taxon>
        <taxon>Alphaproteobacteria</taxon>
        <taxon>Rickettsiales</taxon>
        <taxon>Anaplasmataceae</taxon>
        <taxon>Ehrlichia</taxon>
    </lineage>
</organism>
<accession>Q3YSH8</accession>
<name>RPOZ_EHRCJ</name>
<keyword id="KW-0240">DNA-directed RNA polymerase</keyword>
<keyword id="KW-0548">Nucleotidyltransferase</keyword>
<keyword id="KW-0804">Transcription</keyword>
<keyword id="KW-0808">Transferase</keyword>
<gene>
    <name evidence="1" type="primary">rpoZ</name>
    <name type="ordered locus">Ecaj_0280</name>
</gene>
<evidence type="ECO:0000255" key="1">
    <source>
        <dbReference type="HAMAP-Rule" id="MF_00366"/>
    </source>
</evidence>
<evidence type="ECO:0000256" key="2">
    <source>
        <dbReference type="SAM" id="MobiDB-lite"/>
    </source>
</evidence>